<sequence>MTIIVDYRFPPAINAEKQAKTIAIGQTAGTWSERHSHRQEQLQQHLGEVVGIREEADGYKVARVRFPQINVENDIASLLTMIFGKYSMAGAGKVVGVYLPETYGTKAKVGITGIRQRLGVYDRPLVMAIFKPALGLSAQDHADILREVAFAGLDVIKDDEIMADLPVAPTHERLDCCRLVLEEVRQQTGRNVLYAVNVTGKADELQRKARLLVKHGANALLLNVLTYGFSVLEALASDPAIDVPIFAHPAFAGAMCAGSDTGLAYSVVLGTMMAHAGADAVLYPAAYGSLPFDPQEEGKIRDILRDRNVFPVPSAGIRPGIVPQVLGDYGRNVILNAGTGIMDHPSGPASGVRAFFEALARIEAGDSFDPANLPEGALKQAILEWG</sequence>
<name>MTNW_MICAN</name>
<accession>B0JTU1</accession>
<gene>
    <name evidence="1" type="primary">mtnW</name>
    <name type="ordered locus">MAE_13070</name>
</gene>
<keyword id="KW-0028">Amino-acid biosynthesis</keyword>
<keyword id="KW-0413">Isomerase</keyword>
<keyword id="KW-0460">Magnesium</keyword>
<keyword id="KW-0479">Metal-binding</keyword>
<keyword id="KW-0486">Methionine biosynthesis</keyword>
<reference key="1">
    <citation type="journal article" date="2007" name="DNA Res.">
        <title>Complete genomic structure of the bloom-forming toxic cyanobacterium Microcystis aeruginosa NIES-843.</title>
        <authorList>
            <person name="Kaneko T."/>
            <person name="Nakajima N."/>
            <person name="Okamoto S."/>
            <person name="Suzuki I."/>
            <person name="Tanabe Y."/>
            <person name="Tamaoki M."/>
            <person name="Nakamura Y."/>
            <person name="Kasai F."/>
            <person name="Watanabe A."/>
            <person name="Kawashima K."/>
            <person name="Kishida Y."/>
            <person name="Ono A."/>
            <person name="Shimizu Y."/>
            <person name="Takahashi C."/>
            <person name="Minami C."/>
            <person name="Fujishiro T."/>
            <person name="Kohara M."/>
            <person name="Katoh M."/>
            <person name="Nakazaki N."/>
            <person name="Nakayama S."/>
            <person name="Yamada M."/>
            <person name="Tabata S."/>
            <person name="Watanabe M.M."/>
        </authorList>
    </citation>
    <scope>NUCLEOTIDE SEQUENCE [LARGE SCALE GENOMIC DNA]</scope>
    <source>
        <strain>NIES-843 / IAM M-247</strain>
    </source>
</reference>
<feature type="chain" id="PRO_0000357292" description="2,3-diketo-5-methylthiopentyl-1-phosphate enolase">
    <location>
        <begin position="1"/>
        <end position="386"/>
    </location>
</feature>
<feature type="active site" description="Proton acceptor" evidence="1">
    <location>
        <position position="85"/>
    </location>
</feature>
<feature type="binding site" evidence="1">
    <location>
        <position position="131"/>
    </location>
    <ligand>
        <name>substrate</name>
    </ligand>
</feature>
<feature type="binding site" evidence="1">
    <location>
        <begin position="157"/>
        <end position="160"/>
    </location>
    <ligand>
        <name>substrate</name>
    </ligand>
</feature>
<feature type="binding site" description="via carbamate group" evidence="1">
    <location>
        <position position="157"/>
    </location>
    <ligand>
        <name>Mg(2+)</name>
        <dbReference type="ChEBI" id="CHEBI:18420"/>
    </ligand>
</feature>
<feature type="binding site" evidence="1">
    <location>
        <position position="159"/>
    </location>
    <ligand>
        <name>Mg(2+)</name>
        <dbReference type="ChEBI" id="CHEBI:18420"/>
    </ligand>
</feature>
<feature type="binding site" evidence="1">
    <location>
        <position position="160"/>
    </location>
    <ligand>
        <name>Mg(2+)</name>
        <dbReference type="ChEBI" id="CHEBI:18420"/>
    </ligand>
</feature>
<feature type="binding site" evidence="1">
    <location>
        <position position="248"/>
    </location>
    <ligand>
        <name>substrate</name>
    </ligand>
</feature>
<feature type="binding site" evidence="1">
    <location>
        <position position="316"/>
    </location>
    <ligand>
        <name>substrate</name>
    </ligand>
</feature>
<feature type="binding site" evidence="1">
    <location>
        <begin position="338"/>
        <end position="339"/>
    </location>
    <ligand>
        <name>substrate</name>
    </ligand>
</feature>
<feature type="modified residue" description="N6-carboxylysine" evidence="1">
    <location>
        <position position="157"/>
    </location>
</feature>
<dbReference type="EC" id="5.3.2.5" evidence="1"/>
<dbReference type="EMBL" id="AP009552">
    <property type="protein sequence ID" value="BAG01129.1"/>
    <property type="molecule type" value="Genomic_DNA"/>
</dbReference>
<dbReference type="RefSeq" id="WP_012264739.1">
    <property type="nucleotide sequence ID" value="NC_010296.1"/>
</dbReference>
<dbReference type="SMR" id="B0JTU1"/>
<dbReference type="STRING" id="449447.MAE_13070"/>
<dbReference type="PaxDb" id="449447-MAE_13070"/>
<dbReference type="EnsemblBacteria" id="BAG01129">
    <property type="protein sequence ID" value="BAG01129"/>
    <property type="gene ID" value="MAE_13070"/>
</dbReference>
<dbReference type="KEGG" id="mar:MAE_13070"/>
<dbReference type="PATRIC" id="fig|449447.4.peg.1206"/>
<dbReference type="eggNOG" id="COG1850">
    <property type="taxonomic scope" value="Bacteria"/>
</dbReference>
<dbReference type="HOGENOM" id="CLU_031450_3_1_3"/>
<dbReference type="BioCyc" id="MAER449447:MAE_RS05785-MONOMER"/>
<dbReference type="UniPathway" id="UPA00904">
    <property type="reaction ID" value="UER00876"/>
</dbReference>
<dbReference type="Proteomes" id="UP000001510">
    <property type="component" value="Chromosome"/>
</dbReference>
<dbReference type="GO" id="GO:0043715">
    <property type="term" value="F:2,3-diketo-5-methylthiopentyl-1-phosphate enolase activity"/>
    <property type="evidence" value="ECO:0007669"/>
    <property type="project" value="UniProtKB-UniRule"/>
</dbReference>
<dbReference type="GO" id="GO:0000287">
    <property type="term" value="F:magnesium ion binding"/>
    <property type="evidence" value="ECO:0007669"/>
    <property type="project" value="UniProtKB-UniRule"/>
</dbReference>
<dbReference type="GO" id="GO:0016984">
    <property type="term" value="F:ribulose-bisphosphate carboxylase activity"/>
    <property type="evidence" value="ECO:0007669"/>
    <property type="project" value="InterPro"/>
</dbReference>
<dbReference type="GO" id="GO:0015977">
    <property type="term" value="P:carbon fixation"/>
    <property type="evidence" value="ECO:0007669"/>
    <property type="project" value="InterPro"/>
</dbReference>
<dbReference type="GO" id="GO:0019509">
    <property type="term" value="P:L-methionine salvage from methylthioadenosine"/>
    <property type="evidence" value="ECO:0007669"/>
    <property type="project" value="UniProtKB-UniRule"/>
</dbReference>
<dbReference type="CDD" id="cd08209">
    <property type="entry name" value="RLP_DK-MTP-1-P-enolase"/>
    <property type="match status" value="1"/>
</dbReference>
<dbReference type="Gene3D" id="3.20.20.110">
    <property type="entry name" value="Ribulose bisphosphate carboxylase, large subunit, C-terminal domain"/>
    <property type="match status" value="1"/>
</dbReference>
<dbReference type="Gene3D" id="3.30.70.150">
    <property type="entry name" value="RuBisCO large subunit, N-terminal domain"/>
    <property type="match status" value="1"/>
</dbReference>
<dbReference type="HAMAP" id="MF_01679">
    <property type="entry name" value="Salvage_MtnW"/>
    <property type="match status" value="1"/>
</dbReference>
<dbReference type="InterPro" id="IPR017717">
    <property type="entry name" value="Diketo-Methiopentyl-P_enolase"/>
</dbReference>
<dbReference type="InterPro" id="IPR033966">
    <property type="entry name" value="RuBisCO"/>
</dbReference>
<dbReference type="InterPro" id="IPR000685">
    <property type="entry name" value="RuBisCO_lsu_C"/>
</dbReference>
<dbReference type="InterPro" id="IPR036376">
    <property type="entry name" value="RuBisCO_lsu_C_sf"/>
</dbReference>
<dbReference type="InterPro" id="IPR017443">
    <property type="entry name" value="RuBisCO_lsu_fd_N"/>
</dbReference>
<dbReference type="InterPro" id="IPR036422">
    <property type="entry name" value="RuBisCO_lsu_N_sf"/>
</dbReference>
<dbReference type="PANTHER" id="PTHR42704">
    <property type="entry name" value="RIBULOSE BISPHOSPHATE CARBOXYLASE"/>
    <property type="match status" value="1"/>
</dbReference>
<dbReference type="PANTHER" id="PTHR42704:SF17">
    <property type="entry name" value="RIBULOSE BISPHOSPHATE CARBOXYLASE LARGE CHAIN"/>
    <property type="match status" value="1"/>
</dbReference>
<dbReference type="Pfam" id="PF00016">
    <property type="entry name" value="RuBisCO_large"/>
    <property type="match status" value="1"/>
</dbReference>
<dbReference type="Pfam" id="PF02788">
    <property type="entry name" value="RuBisCO_large_N"/>
    <property type="match status" value="1"/>
</dbReference>
<dbReference type="SFLD" id="SFLDF00157">
    <property type="entry name" value="2_3-diketo-5-methylthiopentyl"/>
    <property type="match status" value="1"/>
</dbReference>
<dbReference type="SFLD" id="SFLDG00301">
    <property type="entry name" value="RuBisCO-like_proteins"/>
    <property type="match status" value="1"/>
</dbReference>
<dbReference type="SUPFAM" id="SSF51649">
    <property type="entry name" value="RuBisCo, C-terminal domain"/>
    <property type="match status" value="1"/>
</dbReference>
<dbReference type="SUPFAM" id="SSF54966">
    <property type="entry name" value="RuBisCO, large subunit, small (N-terminal) domain"/>
    <property type="match status" value="1"/>
</dbReference>
<evidence type="ECO:0000255" key="1">
    <source>
        <dbReference type="HAMAP-Rule" id="MF_01679"/>
    </source>
</evidence>
<comment type="function">
    <text evidence="1">Catalyzes the enolization of 2,3-diketo-5-methylthiopentyl-1-phosphate (DK-MTP-1-P) into 2-hydroxy-3-keto-5-methylthiopentenyl-1-phosphate (HK-MTPenyl-1-P).</text>
</comment>
<comment type="catalytic activity">
    <reaction evidence="1">
        <text>5-methylsulfanyl-2,3-dioxopentyl phosphate = 2-hydroxy-5-methylsulfanyl-3-oxopent-1-enyl phosphate</text>
        <dbReference type="Rhea" id="RHEA:18769"/>
        <dbReference type="ChEBI" id="CHEBI:58828"/>
        <dbReference type="ChEBI" id="CHEBI:59505"/>
        <dbReference type="EC" id="5.3.2.5"/>
    </reaction>
</comment>
<comment type="cofactor">
    <cofactor evidence="1">
        <name>Mg(2+)</name>
        <dbReference type="ChEBI" id="CHEBI:18420"/>
    </cofactor>
    <text evidence="1">Binds 1 Mg(2+) ion per subunit.</text>
</comment>
<comment type="pathway">
    <text evidence="1">Amino-acid biosynthesis; L-methionine biosynthesis via salvage pathway; L-methionine from S-methyl-5-thio-alpha-D-ribose 1-phosphate: step 3/6.</text>
</comment>
<comment type="subunit">
    <text evidence="1">Homodimer.</text>
</comment>
<comment type="miscellaneous">
    <text evidence="1">Has no RuBP-carboxylation activity.</text>
</comment>
<comment type="similarity">
    <text evidence="1">Belongs to the RuBisCO large chain family. Type IV subfamily.</text>
</comment>
<protein>
    <recommendedName>
        <fullName evidence="1">2,3-diketo-5-methylthiopentyl-1-phosphate enolase</fullName>
        <shortName evidence="1">DK-MTP-1-P enolase</shortName>
        <ecNumber evidence="1">5.3.2.5</ecNumber>
    </recommendedName>
    <alternativeName>
        <fullName evidence="1">RuBisCO-like protein</fullName>
        <shortName evidence="1">RLP</shortName>
    </alternativeName>
</protein>
<proteinExistence type="inferred from homology"/>
<organism>
    <name type="scientific">Microcystis aeruginosa (strain NIES-843 / IAM M-2473)</name>
    <dbReference type="NCBI Taxonomy" id="449447"/>
    <lineage>
        <taxon>Bacteria</taxon>
        <taxon>Bacillati</taxon>
        <taxon>Cyanobacteriota</taxon>
        <taxon>Cyanophyceae</taxon>
        <taxon>Oscillatoriophycideae</taxon>
        <taxon>Chroococcales</taxon>
        <taxon>Microcystaceae</taxon>
        <taxon>Microcystis</taxon>
    </lineage>
</organism>